<protein>
    <recommendedName>
        <fullName evidence="1">Argininosuccinate lyase</fullName>
        <shortName evidence="1">ASAL</shortName>
        <ecNumber evidence="1">4.3.2.1</ecNumber>
    </recommendedName>
    <alternativeName>
        <fullName evidence="1">Arginosuccinase</fullName>
    </alternativeName>
</protein>
<keyword id="KW-0028">Amino-acid biosynthesis</keyword>
<keyword id="KW-0055">Arginine biosynthesis</keyword>
<keyword id="KW-0963">Cytoplasm</keyword>
<keyword id="KW-0456">Lyase</keyword>
<dbReference type="EC" id="4.3.2.1" evidence="1"/>
<dbReference type="EMBL" id="CP000561">
    <property type="protein sequence ID" value="ABO07803.1"/>
    <property type="molecule type" value="Genomic_DNA"/>
</dbReference>
<dbReference type="RefSeq" id="WP_011849060.1">
    <property type="nucleotide sequence ID" value="NC_009073.1"/>
</dbReference>
<dbReference type="SMR" id="A3MT36"/>
<dbReference type="STRING" id="410359.Pcal_0368"/>
<dbReference type="GeneID" id="4908881"/>
<dbReference type="KEGG" id="pcl:Pcal_0368"/>
<dbReference type="eggNOG" id="arCOG01748">
    <property type="taxonomic scope" value="Archaea"/>
</dbReference>
<dbReference type="HOGENOM" id="CLU_027272_2_0_2"/>
<dbReference type="OrthoDB" id="27337at2157"/>
<dbReference type="UniPathway" id="UPA00068">
    <property type="reaction ID" value="UER00114"/>
</dbReference>
<dbReference type="Proteomes" id="UP000001431">
    <property type="component" value="Chromosome"/>
</dbReference>
<dbReference type="GO" id="GO:0005829">
    <property type="term" value="C:cytosol"/>
    <property type="evidence" value="ECO:0007669"/>
    <property type="project" value="TreeGrafter"/>
</dbReference>
<dbReference type="GO" id="GO:0004056">
    <property type="term" value="F:argininosuccinate lyase activity"/>
    <property type="evidence" value="ECO:0007669"/>
    <property type="project" value="UniProtKB-UniRule"/>
</dbReference>
<dbReference type="GO" id="GO:0042450">
    <property type="term" value="P:arginine biosynthetic process via ornithine"/>
    <property type="evidence" value="ECO:0007669"/>
    <property type="project" value="InterPro"/>
</dbReference>
<dbReference type="GO" id="GO:0006526">
    <property type="term" value="P:L-arginine biosynthetic process"/>
    <property type="evidence" value="ECO:0007669"/>
    <property type="project" value="UniProtKB-UniRule"/>
</dbReference>
<dbReference type="Gene3D" id="1.10.40.30">
    <property type="entry name" value="Fumarase/aspartase (C-terminal domain)"/>
    <property type="match status" value="1"/>
</dbReference>
<dbReference type="Gene3D" id="1.20.200.10">
    <property type="entry name" value="Fumarase/aspartase (Central domain)"/>
    <property type="match status" value="1"/>
</dbReference>
<dbReference type="Gene3D" id="1.10.275.10">
    <property type="entry name" value="Fumarase/aspartase (N-terminal domain)"/>
    <property type="match status" value="1"/>
</dbReference>
<dbReference type="HAMAP" id="MF_00006">
    <property type="entry name" value="Arg_succ_lyase"/>
    <property type="match status" value="1"/>
</dbReference>
<dbReference type="InterPro" id="IPR009049">
    <property type="entry name" value="Argininosuccinate_lyase"/>
</dbReference>
<dbReference type="InterPro" id="IPR024083">
    <property type="entry name" value="Fumarase/histidase_N"/>
</dbReference>
<dbReference type="InterPro" id="IPR000362">
    <property type="entry name" value="Fumarate_lyase_fam"/>
</dbReference>
<dbReference type="InterPro" id="IPR022761">
    <property type="entry name" value="Fumarate_lyase_N"/>
</dbReference>
<dbReference type="InterPro" id="IPR008948">
    <property type="entry name" value="L-Aspartase-like"/>
</dbReference>
<dbReference type="PANTHER" id="PTHR43814">
    <property type="entry name" value="ARGININOSUCCINATE LYASE"/>
    <property type="match status" value="1"/>
</dbReference>
<dbReference type="PANTHER" id="PTHR43814:SF1">
    <property type="entry name" value="ARGININOSUCCINATE LYASE"/>
    <property type="match status" value="1"/>
</dbReference>
<dbReference type="Pfam" id="PF00206">
    <property type="entry name" value="Lyase_1"/>
    <property type="match status" value="1"/>
</dbReference>
<dbReference type="PRINTS" id="PR00145">
    <property type="entry name" value="ARGSUCLYASE"/>
</dbReference>
<dbReference type="PRINTS" id="PR00149">
    <property type="entry name" value="FUMRATELYASE"/>
</dbReference>
<dbReference type="SUPFAM" id="SSF48557">
    <property type="entry name" value="L-aspartase-like"/>
    <property type="match status" value="1"/>
</dbReference>
<feature type="chain" id="PRO_1000089105" description="Argininosuccinate lyase">
    <location>
        <begin position="1"/>
        <end position="429"/>
    </location>
</feature>
<comment type="catalytic activity">
    <reaction evidence="1">
        <text>2-(N(omega)-L-arginino)succinate = fumarate + L-arginine</text>
        <dbReference type="Rhea" id="RHEA:24020"/>
        <dbReference type="ChEBI" id="CHEBI:29806"/>
        <dbReference type="ChEBI" id="CHEBI:32682"/>
        <dbReference type="ChEBI" id="CHEBI:57472"/>
        <dbReference type="EC" id="4.3.2.1"/>
    </reaction>
</comment>
<comment type="pathway">
    <text evidence="1">Amino-acid biosynthesis; L-arginine biosynthesis; L-arginine from L-ornithine and carbamoyl phosphate: step 3/3.</text>
</comment>
<comment type="subcellular location">
    <subcellularLocation>
        <location evidence="1">Cytoplasm</location>
    </subcellularLocation>
</comment>
<comment type="similarity">
    <text evidence="1">Belongs to the lyase 1 family. Argininosuccinate lyase subfamily.</text>
</comment>
<sequence length="429" mass="46725">MAFYRSWIGGGGDLVRRYTSSMADDVEIAEEVVKILKTHVAHLAEVGVIPREAAERIAKALDEVDYDALAKGGFEDIHEAVEKWVIDRVGEEAGGWLGLGRSRNDHVAAAIRLAALRKLAELKRGLAALRCALAKRALQYADCAMPSFTHFQPAQAITFGHYLLSIDELVEEFSRALAGVEPLLKRSPLGAGPAGGVKTPIDRRRLAKALGFEDVVGNALYASGSRFFASAAASIVVSFLVELSRYVDDFIRWNSPAIGYVKAPDSHVSTSSIMPHKRNLVTLEVLRARISEAVGHLTALYAVQAKIGAGYSLDLQEATRHLWAILKIAGEGVEVLRDFVEGLEFNCEKARLDAETYYATSSDTAEAIALSGVPFRRAYFQLAEEIKRGSAKLLSPEEAVKRPTEGSANPEEVRRAASARLIFCKTPAF</sequence>
<organism>
    <name type="scientific">Pyrobaculum calidifontis (strain DSM 21063 / JCM 11548 / VA1)</name>
    <dbReference type="NCBI Taxonomy" id="410359"/>
    <lineage>
        <taxon>Archaea</taxon>
        <taxon>Thermoproteota</taxon>
        <taxon>Thermoprotei</taxon>
        <taxon>Thermoproteales</taxon>
        <taxon>Thermoproteaceae</taxon>
        <taxon>Pyrobaculum</taxon>
    </lineage>
</organism>
<accession>A3MT36</accession>
<reference key="1">
    <citation type="submission" date="2007-02" db="EMBL/GenBank/DDBJ databases">
        <title>Complete sequence of Pyrobaculum calidifontis JCM 11548.</title>
        <authorList>
            <consortium name="US DOE Joint Genome Institute"/>
            <person name="Copeland A."/>
            <person name="Lucas S."/>
            <person name="Lapidus A."/>
            <person name="Barry K."/>
            <person name="Glavina del Rio T."/>
            <person name="Dalin E."/>
            <person name="Tice H."/>
            <person name="Pitluck S."/>
            <person name="Chain P."/>
            <person name="Malfatti S."/>
            <person name="Shin M."/>
            <person name="Vergez L."/>
            <person name="Schmutz J."/>
            <person name="Larimer F."/>
            <person name="Land M."/>
            <person name="Hauser L."/>
            <person name="Kyrpides N."/>
            <person name="Mikhailova N."/>
            <person name="Cozen A.E."/>
            <person name="Fitz-Gibbon S.T."/>
            <person name="House C.H."/>
            <person name="Saltikov C."/>
            <person name="Lowe T.M."/>
            <person name="Richardson P."/>
        </authorList>
    </citation>
    <scope>NUCLEOTIDE SEQUENCE [LARGE SCALE GENOMIC DNA]</scope>
    <source>
        <strain>DSM 21063 / JCM 11548 / VA1</strain>
    </source>
</reference>
<name>ARLY_PYRCJ</name>
<evidence type="ECO:0000255" key="1">
    <source>
        <dbReference type="HAMAP-Rule" id="MF_00006"/>
    </source>
</evidence>
<gene>
    <name evidence="1" type="primary">argH</name>
    <name type="ordered locus">Pcal_0368</name>
</gene>
<proteinExistence type="inferred from homology"/>